<proteinExistence type="evidence at protein level"/>
<keyword id="KW-0002">3D-structure</keyword>
<keyword id="KW-0067">ATP-binding</keyword>
<keyword id="KW-1003">Cell membrane</keyword>
<keyword id="KW-0217">Developmental protein</keyword>
<keyword id="KW-0221">Differentiation</keyword>
<keyword id="KW-1015">Disulfide bond</keyword>
<keyword id="KW-0325">Glycoprotein</keyword>
<keyword id="KW-0393">Immunoglobulin domain</keyword>
<keyword id="KW-0418">Kinase</keyword>
<keyword id="KW-0460">Magnesium</keyword>
<keyword id="KW-0472">Membrane</keyword>
<keyword id="KW-0479">Metal-binding</keyword>
<keyword id="KW-0514">Muscle protein</keyword>
<keyword id="KW-0547">Nucleotide-binding</keyword>
<keyword id="KW-0597">Phosphoprotein</keyword>
<keyword id="KW-0628">Postsynaptic cell membrane</keyword>
<keyword id="KW-0675">Receptor</keyword>
<keyword id="KW-1185">Reference proteome</keyword>
<keyword id="KW-0677">Repeat</keyword>
<keyword id="KW-0732">Signal</keyword>
<keyword id="KW-0770">Synapse</keyword>
<keyword id="KW-0808">Transferase</keyword>
<keyword id="KW-0812">Transmembrane</keyword>
<keyword id="KW-1133">Transmembrane helix</keyword>
<keyword id="KW-0829">Tyrosine-protein kinase</keyword>
<keyword id="KW-0832">Ubl conjugation</keyword>
<gene>
    <name type="primary">Musk</name>
</gene>
<comment type="function">
    <text evidence="8 9 12">Receptor tyrosine kinase which plays a central role in the formation and the maintenance of the neuromuscular junction (NMJ), the synapse between the motor neuron and the skeletal muscle (PubMed:23326516). Recruitment of AGRIN by LRP4 to the MUSK signaling complex induces phosphorylation and activation of MUSK, the kinase of the complex. The activation of MUSK in myotubes regulates the formation of NMJs through the regulation of different processes including the specific expression of genes in subsynaptic nuclei, the reorganization of the actin cytoskeleton and the clustering of the acetylcholine receptors (AChR) in the postsynaptic membrane. May regulate AChR phosphorylation and clustering through activation of ABL1 and Src family kinases which in turn regulate MUSK. DVL1 and PAK1 that form a ternary complex with MUSK are also important for MUSK-dependent regulation of AChR clustering. May positively regulate Rho family GTPases through FNTA. Mediates the phosphorylation of FNTA which promotes prenylation, recruitment to membranes and activation of RAC1 a regulator of the actin cytoskeleton and of gene expression. Other effectors of the MUSK signaling include DNAJA3 which functions downstream of MUSK. May also play a role within the central nervous system by mediating cholinergic responses, synaptic plasticity and memory formation.</text>
</comment>
<comment type="catalytic activity">
    <reaction evidence="7">
        <text>L-tyrosyl-[protein] + ATP = O-phospho-L-tyrosyl-[protein] + ADP + H(+)</text>
        <dbReference type="Rhea" id="RHEA:10596"/>
        <dbReference type="Rhea" id="RHEA-COMP:10136"/>
        <dbReference type="Rhea" id="RHEA-COMP:20101"/>
        <dbReference type="ChEBI" id="CHEBI:15378"/>
        <dbReference type="ChEBI" id="CHEBI:30616"/>
        <dbReference type="ChEBI" id="CHEBI:46858"/>
        <dbReference type="ChEBI" id="CHEBI:61978"/>
        <dbReference type="ChEBI" id="CHEBI:456216"/>
        <dbReference type="EC" id="2.7.10.1"/>
    </reaction>
</comment>
<comment type="cofactor">
    <cofactor evidence="2">
        <name>Mg(2+)</name>
        <dbReference type="ChEBI" id="CHEBI:18420"/>
    </cofactor>
</comment>
<comment type="activity regulation">
    <text evidence="1">Positively regulated by CK2.</text>
</comment>
<comment type="subunit">
    <text evidence="1 12 14">Monomer (By similarity). Homodimer (Probable). Interacts with LRP4; the heterodimer forms an AGRIN receptor complex that binds AGRIN resulting in activation of MUSK. Forms a heterotetramer composed of 2 DOK7 and 2 MUSK molecules which facilitates MUSK trans-autophosphorylation on tyrosine residue and activation. Interacts (via cytoplasmic part) with DOK7 (via IRS-type PTB domain); requires MUSK phosphorylation. Interacts with DVL1 (via DEP domain); the interaction is direct and mediates the formation of a DVL1, MUSK and PAK1 ternary complex involved in AChR clustering (By similarity). Interacts with PDZRN3; this interaction is enhanced by agrin (By similarity). Interacts with FNTA; the interaction is direct and mediates AGRIN-induced phosphorylation and activation of FNTA (By similarity). Interacts with CSNK2B; mediates regulation by CK2 (By similarity). Interacts (via the cytoplasmic domain) with DNAJA3. Interacts with NSF; may regulate MUSK endocytosis and activity (By similarity). Interacts with CAV3; may regulate MUSK signaling (By similarity). Interacts with RNF31 (By similarity). Interacts with DOK7 (PubMed:23326516).</text>
</comment>
<comment type="subcellular location">
    <subcellularLocation>
        <location evidence="15">Postsynaptic cell membrane</location>
        <topology evidence="15">Single-pass type I membrane protein</topology>
    </subcellularLocation>
    <text evidence="2 14">Localizes to the postsynaptic cell membrane of the neuromuscular junction.</text>
</comment>
<comment type="tissue specificity">
    <text evidence="13">Muscle specific.</text>
</comment>
<comment type="developmental stage">
    <text evidence="13">From 14.0 dpc, expressed in developing myotomes. Once the muscle is innervated, localized to the neuromuscular junction (NMJ), where its expression is restricted to synaptic nuclei. Expression drops after birth.</text>
</comment>
<comment type="induction">
    <text evidence="13">Up-regulated upon denervation (at protein level).</text>
</comment>
<comment type="PTM">
    <text evidence="1">Ubiquitinated by PDZRN3. Ubiquitination promotes endocytosis and lysosomal degradation (By similarity).</text>
</comment>
<comment type="PTM">
    <text evidence="3 12">Phosphorylated (PubMed:23326516). Phosphorylation is induced by AGRIN in a LRP4-dependent manner (PubMed:23326516). Autophosphorylated (By similarity). Autophosphorylation at Tyr-553 is required for interaction with DOK7 which in turn stimulates the phosphorylation and the activation of MUSK (By similarity).</text>
</comment>
<comment type="PTM">
    <text evidence="1">Neddylated.</text>
</comment>
<comment type="similarity">
    <text evidence="6">Belongs to the protein kinase superfamily. Tyr protein kinase family.</text>
</comment>
<evidence type="ECO:0000250" key="1"/>
<evidence type="ECO:0000250" key="2">
    <source>
        <dbReference type="UniProtKB" id="O15146"/>
    </source>
</evidence>
<evidence type="ECO:0000250" key="3">
    <source>
        <dbReference type="UniProtKB" id="Q61006"/>
    </source>
</evidence>
<evidence type="ECO:0000255" key="4"/>
<evidence type="ECO:0000255" key="5">
    <source>
        <dbReference type="PROSITE-ProRule" id="PRU00090"/>
    </source>
</evidence>
<evidence type="ECO:0000255" key="6">
    <source>
        <dbReference type="PROSITE-ProRule" id="PRU00159"/>
    </source>
</evidence>
<evidence type="ECO:0000255" key="7">
    <source>
        <dbReference type="PROSITE-ProRule" id="PRU10028"/>
    </source>
</evidence>
<evidence type="ECO:0000269" key="8">
    <source>
    </source>
</evidence>
<evidence type="ECO:0000269" key="9">
    <source>
    </source>
</evidence>
<evidence type="ECO:0000269" key="10">
    <source>
    </source>
</evidence>
<evidence type="ECO:0000269" key="11">
    <source>
    </source>
</evidence>
<evidence type="ECO:0000269" key="12">
    <source>
    </source>
</evidence>
<evidence type="ECO:0000269" key="13">
    <source>
    </source>
</evidence>
<evidence type="ECO:0000305" key="14"/>
<evidence type="ECO:0000305" key="15">
    <source>
    </source>
</evidence>
<evidence type="ECO:0007829" key="16">
    <source>
        <dbReference type="PDB" id="1LUF"/>
    </source>
</evidence>
<evidence type="ECO:0007829" key="17">
    <source>
        <dbReference type="PDB" id="2IEP"/>
    </source>
</evidence>
<evidence type="ECO:0007829" key="18">
    <source>
        <dbReference type="PDB" id="3HKL"/>
    </source>
</evidence>
<protein>
    <recommendedName>
        <fullName>Muscle, skeletal receptor tyrosine protein kinase</fullName>
        <ecNumber>2.7.10.1</ecNumber>
    </recommendedName>
    <alternativeName>
        <fullName>Muscle-specific tyrosine protein kinase receptor</fullName>
        <shortName>MuSK</shortName>
        <shortName>Muscle-specific kinase receptor</shortName>
    </alternativeName>
</protein>
<sequence length="868" mass="96822">MRELVNIPLLQMLTLVAFSGTEKLPKAPVITTPLETVDALVEEVATFMCAVESYPQPEISWTRNKILIKLFDTRYSIRENGQLLTILSVEDSDDGIYCCTANNGVGGAVESCGALQVKMKPKITRPPINVKIIEGLKAVLPCTTMGNPKPSVSWIKGDSALRENSRIAVLESGSLRIHNVQKEDAGQYRCVAKNSLGTAYSKLVKLEVEVFARILRAPESHNVTFGSFVTLRCTAIGMPVPTISWIENGNAVSSGSIQENVKDRVIDSRLQLFITKPGLYTCIATNKHGEKFSTAKAAATVSIAEWSKSQKESKGYCAQYRGEVCDAVLVKDSLVFFNTSYPDPEEAQELLIHTAWNELKAVSPLCRPAAEALLCNHLFQECSPGVLPTPMPICREYCLAVKELFCAKEWLAMEGKTHRGLYRSGMHFLPVPECSKLPSMHQDPTACTRLPYLDYKKENITTFPSITSSKPSVDIPNLPASTSSFAVSPAYSMTVIISIMSCFAVFALLTITTLYCCRRRREWKNKKRESAAVTLTTLPSELLLDRLHPNPMYQRMPLLLNPKLLSLEYPRNNIEYVRDIGEGAFGRVFQARAPGLLPYEPFTMVAVKMLKEEASADMQADFQREAALMAEFDNPNIVKLLGVCAVGKPMCLLFEYMAYGDLNEFLRSMSPHTVCSLSHSDLSTRARVSSPGPPPLSCAEQLCIARQVAAGMAYLSERKFVHRDLATRNCLVGENMVVKIADFGLSRNIYSADYYKADGNDAIPIRWMPPESIFYNRYTTESDVWAYGVVLWEIFSYGLQPYYGMAHEEVIYYVRDGNILACPENCPLELYNLMRLCWSKLPADRPSFCSIHRILQRMCERAEGTVGV</sequence>
<organism>
    <name type="scientific">Rattus norvegicus</name>
    <name type="common">Rat</name>
    <dbReference type="NCBI Taxonomy" id="10116"/>
    <lineage>
        <taxon>Eukaryota</taxon>
        <taxon>Metazoa</taxon>
        <taxon>Chordata</taxon>
        <taxon>Craniata</taxon>
        <taxon>Vertebrata</taxon>
        <taxon>Euteleostomi</taxon>
        <taxon>Mammalia</taxon>
        <taxon>Eutheria</taxon>
        <taxon>Euarchontoglires</taxon>
        <taxon>Glires</taxon>
        <taxon>Rodentia</taxon>
        <taxon>Myomorpha</taxon>
        <taxon>Muroidea</taxon>
        <taxon>Muridae</taxon>
        <taxon>Murinae</taxon>
        <taxon>Rattus</taxon>
    </lineage>
</organism>
<name>MUSK_RAT</name>
<feature type="signal peptide" evidence="4">
    <location>
        <begin position="1"/>
        <end position="21"/>
    </location>
</feature>
<feature type="chain" id="PRO_0000024448" description="Muscle, skeletal receptor tyrosine protein kinase">
    <location>
        <begin position="22"/>
        <end position="868"/>
    </location>
</feature>
<feature type="topological domain" description="Extracellular" evidence="4">
    <location>
        <begin position="22"/>
        <end position="494"/>
    </location>
</feature>
<feature type="transmembrane region" description="Helical" evidence="4">
    <location>
        <begin position="495"/>
        <end position="515"/>
    </location>
</feature>
<feature type="topological domain" description="Cytoplasmic" evidence="4">
    <location>
        <begin position="516"/>
        <end position="868"/>
    </location>
</feature>
<feature type="domain" description="Ig-like 1">
    <location>
        <begin position="28"/>
        <end position="116"/>
    </location>
</feature>
<feature type="domain" description="Ig-like 2">
    <location>
        <begin position="121"/>
        <end position="205"/>
    </location>
</feature>
<feature type="domain" description="Ig-like 3">
    <location>
        <begin position="212"/>
        <end position="302"/>
    </location>
</feature>
<feature type="domain" description="FZ" evidence="5">
    <location>
        <begin position="312"/>
        <end position="450"/>
    </location>
</feature>
<feature type="domain" description="Protein kinase" evidence="6">
    <location>
        <begin position="574"/>
        <end position="855"/>
    </location>
</feature>
<feature type="active site" description="Proton acceptor" evidence="6 7">
    <location>
        <position position="724"/>
    </location>
</feature>
<feature type="binding site" evidence="6">
    <location>
        <begin position="580"/>
        <end position="588"/>
    </location>
    <ligand>
        <name>ATP</name>
        <dbReference type="ChEBI" id="CHEBI:30616"/>
    </ligand>
</feature>
<feature type="binding site" evidence="6">
    <location>
        <position position="608"/>
    </location>
    <ligand>
        <name>ATP</name>
        <dbReference type="ChEBI" id="CHEBI:30616"/>
    </ligand>
</feature>
<feature type="modified residue" description="Phosphotyrosine; by autocatalysis" evidence="3">
    <location>
        <position position="553"/>
    </location>
</feature>
<feature type="modified residue" description="Phosphoserine; by CK2" evidence="3">
    <location>
        <position position="680"/>
    </location>
</feature>
<feature type="modified residue" description="Phosphoserine; by CK2" evidence="3">
    <location>
        <position position="697"/>
    </location>
</feature>
<feature type="modified residue" description="Phosphotyrosine; by autocatalysis" evidence="11">
    <location>
        <position position="754"/>
    </location>
</feature>
<feature type="glycosylation site" description="N-linked (GlcNAc...) asparagine" evidence="4">
    <location>
        <position position="222"/>
    </location>
</feature>
<feature type="glycosylation site" description="N-linked (GlcNAc...) asparagine" evidence="10">
    <location>
        <position position="338"/>
    </location>
</feature>
<feature type="glycosylation site" description="N-linked (GlcNAc...) asparagine" evidence="4">
    <location>
        <position position="459"/>
    </location>
</feature>
<feature type="disulfide bond">
    <location>
        <begin position="49"/>
        <end position="99"/>
    </location>
</feature>
<feature type="disulfide bond">
    <location>
        <begin position="98"/>
        <end position="112"/>
    </location>
</feature>
<feature type="disulfide bond">
    <location>
        <begin position="142"/>
        <end position="190"/>
    </location>
</feature>
<feature type="disulfide bond" evidence="1">
    <location>
        <begin position="233"/>
        <end position="282"/>
    </location>
</feature>
<feature type="disulfide bond">
    <location>
        <begin position="317"/>
        <end position="382"/>
    </location>
</feature>
<feature type="disulfide bond">
    <location>
        <begin position="325"/>
        <end position="375"/>
    </location>
</feature>
<feature type="disulfide bond">
    <location>
        <begin position="366"/>
        <end position="406"/>
    </location>
</feature>
<feature type="disulfide bond">
    <location>
        <begin position="394"/>
        <end position="447"/>
    </location>
</feature>
<feature type="disulfide bond">
    <location>
        <begin position="398"/>
        <end position="434"/>
    </location>
</feature>
<feature type="mutagenesis site" description="Strongly reduced agrin-dependent activation and autophosphorylation." evidence="9">
    <original>M</original>
    <variation>R</variation>
    <location>
        <position position="48"/>
    </location>
</feature>
<feature type="mutagenesis site" description="Abolishes agrin-dependent activation and autophosphorylation." evidence="9">
    <original>L</original>
    <variation>R</variation>
    <location>
        <position position="83"/>
    </location>
</feature>
<feature type="mutagenesis site" description="Abolishes agrin-dependent activation and autophosphorylation." evidence="9">
    <original>I</original>
    <variation>A</variation>
    <location>
        <position position="96"/>
    </location>
</feature>
<feature type="mutagenesis site" description="Reduces interaction with DOK7." evidence="12">
    <original>V</original>
    <variation>M</variation>
    <location>
        <position position="789"/>
    </location>
</feature>
<feature type="mutagenesis site" description="Reduces LRP4- and AGRIN-dependent phosphorylation. Reduces DOK7-dependent phosphorylation. Reduces agrin-dependent AChR aggregation in neuromuscular junction. Reduces interaction with DOK7." evidence="12">
    <original>M</original>
    <variation>V</variation>
    <location>
        <position position="834"/>
    </location>
</feature>
<feature type="strand" evidence="17">
    <location>
        <begin position="26"/>
        <end position="32"/>
    </location>
</feature>
<feature type="strand" evidence="17">
    <location>
        <begin position="36"/>
        <end position="40"/>
    </location>
</feature>
<feature type="strand" evidence="17">
    <location>
        <begin position="45"/>
        <end position="48"/>
    </location>
</feature>
<feature type="strand" evidence="17">
    <location>
        <begin position="51"/>
        <end position="55"/>
    </location>
</feature>
<feature type="strand" evidence="17">
    <location>
        <begin position="58"/>
        <end position="63"/>
    </location>
</feature>
<feature type="strand" evidence="17">
    <location>
        <begin position="75"/>
        <end position="78"/>
    </location>
</feature>
<feature type="helix" evidence="17">
    <location>
        <begin position="79"/>
        <end position="81"/>
    </location>
</feature>
<feature type="strand" evidence="17">
    <location>
        <begin position="83"/>
        <end position="88"/>
    </location>
</feature>
<feature type="helix" evidence="17">
    <location>
        <begin position="91"/>
        <end position="93"/>
    </location>
</feature>
<feature type="strand" evidence="17">
    <location>
        <begin position="95"/>
        <end position="102"/>
    </location>
</feature>
<feature type="strand" evidence="17">
    <location>
        <begin position="104"/>
        <end position="106"/>
    </location>
</feature>
<feature type="strand" evidence="17">
    <location>
        <begin position="109"/>
        <end position="125"/>
    </location>
</feature>
<feature type="strand" evidence="17">
    <location>
        <begin position="130"/>
        <end position="133"/>
    </location>
</feature>
<feature type="strand" evidence="17">
    <location>
        <begin position="138"/>
        <end position="140"/>
    </location>
</feature>
<feature type="strand" evidence="17">
    <location>
        <begin position="143"/>
        <end position="148"/>
    </location>
</feature>
<feature type="strand" evidence="17">
    <location>
        <begin position="151"/>
        <end position="156"/>
    </location>
</feature>
<feature type="strand" evidence="17">
    <location>
        <begin position="165"/>
        <end position="169"/>
    </location>
</feature>
<feature type="strand" evidence="17">
    <location>
        <begin position="175"/>
        <end position="179"/>
    </location>
</feature>
<feature type="helix" evidence="17">
    <location>
        <begin position="182"/>
        <end position="184"/>
    </location>
</feature>
<feature type="strand" evidence="17">
    <location>
        <begin position="186"/>
        <end position="194"/>
    </location>
</feature>
<feature type="strand" evidence="17">
    <location>
        <begin position="197"/>
        <end position="200"/>
    </location>
</feature>
<feature type="strand" evidence="17">
    <location>
        <begin position="204"/>
        <end position="209"/>
    </location>
</feature>
<feature type="strand" evidence="18">
    <location>
        <begin position="315"/>
        <end position="318"/>
    </location>
</feature>
<feature type="strand" evidence="18">
    <location>
        <begin position="323"/>
        <end position="325"/>
    </location>
</feature>
<feature type="turn" evidence="18">
    <location>
        <begin position="326"/>
        <end position="328"/>
    </location>
</feature>
<feature type="strand" evidence="18">
    <location>
        <begin position="335"/>
        <end position="338"/>
    </location>
</feature>
<feature type="strand" evidence="18">
    <location>
        <begin position="341"/>
        <end position="343"/>
    </location>
</feature>
<feature type="helix" evidence="18">
    <location>
        <begin position="344"/>
        <end position="359"/>
    </location>
</feature>
<feature type="turn" evidence="18">
    <location>
        <begin position="364"/>
        <end position="366"/>
    </location>
</feature>
<feature type="helix" evidence="18">
    <location>
        <begin position="367"/>
        <end position="378"/>
    </location>
</feature>
<feature type="strand" evidence="18">
    <location>
        <begin position="384"/>
        <end position="387"/>
    </location>
</feature>
<feature type="helix" evidence="18">
    <location>
        <begin position="395"/>
        <end position="403"/>
    </location>
</feature>
<feature type="turn" evidence="18">
    <location>
        <begin position="404"/>
        <end position="409"/>
    </location>
</feature>
<feature type="helix" evidence="18">
    <location>
        <begin position="410"/>
        <end position="424"/>
    </location>
</feature>
<feature type="helix" evidence="18">
    <location>
        <begin position="434"/>
        <end position="436"/>
    </location>
</feature>
<feature type="turn" evidence="18">
    <location>
        <begin position="440"/>
        <end position="442"/>
    </location>
</feature>
<feature type="strand" evidence="18">
    <location>
        <begin position="446"/>
        <end position="448"/>
    </location>
</feature>
<feature type="turn" evidence="18">
    <location>
        <begin position="451"/>
        <end position="453"/>
    </location>
</feature>
<feature type="helix" evidence="16">
    <location>
        <begin position="562"/>
        <end position="566"/>
    </location>
</feature>
<feature type="helix" evidence="16">
    <location>
        <begin position="571"/>
        <end position="573"/>
    </location>
</feature>
<feature type="strand" evidence="16">
    <location>
        <begin position="575"/>
        <end position="582"/>
    </location>
</feature>
<feature type="strand" evidence="16">
    <location>
        <begin position="587"/>
        <end position="594"/>
    </location>
</feature>
<feature type="strand" evidence="16">
    <location>
        <begin position="600"/>
        <end position="609"/>
    </location>
</feature>
<feature type="helix" evidence="16">
    <location>
        <begin position="616"/>
        <end position="630"/>
    </location>
</feature>
<feature type="strand" evidence="16">
    <location>
        <begin position="640"/>
        <end position="644"/>
    </location>
</feature>
<feature type="strand" evidence="16">
    <location>
        <begin position="646"/>
        <end position="649"/>
    </location>
</feature>
<feature type="strand" evidence="16">
    <location>
        <begin position="651"/>
        <end position="655"/>
    </location>
</feature>
<feature type="helix" evidence="16">
    <location>
        <begin position="662"/>
        <end position="668"/>
    </location>
</feature>
<feature type="helix" evidence="16">
    <location>
        <begin position="698"/>
        <end position="717"/>
    </location>
</feature>
<feature type="helix" evidence="16">
    <location>
        <begin position="727"/>
        <end position="729"/>
    </location>
</feature>
<feature type="strand" evidence="16">
    <location>
        <begin position="730"/>
        <end position="732"/>
    </location>
</feature>
<feature type="helix" evidence="16">
    <location>
        <begin position="734"/>
        <end position="736"/>
    </location>
</feature>
<feature type="strand" evidence="16">
    <location>
        <begin position="738"/>
        <end position="740"/>
    </location>
</feature>
<feature type="helix" evidence="16">
    <location>
        <begin position="746"/>
        <end position="749"/>
    </location>
</feature>
<feature type="helix" evidence="16">
    <location>
        <begin position="751"/>
        <end position="753"/>
    </location>
</feature>
<feature type="helix" evidence="16">
    <location>
        <begin position="765"/>
        <end position="767"/>
    </location>
</feature>
<feature type="helix" evidence="16">
    <location>
        <begin position="770"/>
        <end position="775"/>
    </location>
</feature>
<feature type="helix" evidence="16">
    <location>
        <begin position="780"/>
        <end position="795"/>
    </location>
</feature>
<feature type="turn" evidence="16">
    <location>
        <begin position="796"/>
        <end position="798"/>
    </location>
</feature>
<feature type="turn" evidence="16">
    <location>
        <begin position="801"/>
        <end position="804"/>
    </location>
</feature>
<feature type="helix" evidence="16">
    <location>
        <begin position="807"/>
        <end position="815"/>
    </location>
</feature>
<feature type="helix" evidence="16">
    <location>
        <begin position="828"/>
        <end position="837"/>
    </location>
</feature>
<feature type="helix" evidence="16">
    <location>
        <begin position="842"/>
        <end position="844"/>
    </location>
</feature>
<feature type="helix" evidence="16">
    <location>
        <begin position="848"/>
        <end position="857"/>
    </location>
</feature>
<reference key="1">
    <citation type="journal article" date="1995" name="Neuron">
        <title>Receptor tyrosine kinase specific for the skeletal muscle lineage: expression in embryonic muscle, at the neuromuscular junction, and after injury.</title>
        <authorList>
            <person name="Valenzuela D.M."/>
            <person name="Stitt T.N."/>
            <person name="DiStefano P.S."/>
            <person name="Rojas E."/>
            <person name="Mattsson K."/>
            <person name="Compton D.L."/>
            <person name="Nunez L."/>
            <person name="Park J.S."/>
            <person name="Stark J.L."/>
            <person name="Gies D.R."/>
            <person name="Thomas S."/>
            <person name="LeBeau M.M."/>
            <person name="Fernald A.A."/>
            <person name="Copeland N.G."/>
            <person name="Jenkins N.A."/>
            <person name="Burden S.J."/>
            <person name="Glass D.J."/>
            <person name="Yancopoulos G.D."/>
        </authorList>
    </citation>
    <scope>NUCLEOTIDE SEQUENCE [MRNA]</scope>
    <scope>TISSUE SPECIFICITY</scope>
    <scope>DEVELOPMENTAL STAGE</scope>
    <scope>INDUCTION BY DENERVATION</scope>
    <source>
        <tissue>Muscle</tissue>
    </source>
</reference>
<reference key="2">
    <citation type="journal article" date="2006" name="J. Neurosci.">
        <title>MuSK expressed in the brain mediates cholinergic responses, synaptic plasticity, and memory formation.</title>
        <authorList>
            <person name="Garcia-Osta A."/>
            <person name="Tsokas P."/>
            <person name="Pollonini G."/>
            <person name="Landau E.M."/>
            <person name="Blitzer R."/>
            <person name="Alberini C.M."/>
        </authorList>
    </citation>
    <scope>FUNCTION IN MEMORY FORMATION</scope>
</reference>
<reference key="3">
    <citation type="journal article" date="2008" name="Cell">
        <title>Lrp4 is a receptor for Agrin and forms a complex with MuSK.</title>
        <authorList>
            <person name="Kim N."/>
            <person name="Stiegler A.L."/>
            <person name="Cameron T.O."/>
            <person name="Hallock P.T."/>
            <person name="Gomez A.M."/>
            <person name="Huang J.H."/>
            <person name="Hubbard S.R."/>
            <person name="Dustin M.L."/>
            <person name="Burden S.J."/>
        </authorList>
    </citation>
    <scope>INTERACTION WITH LRP4</scope>
</reference>
<reference key="4">
    <citation type="journal article" date="2008" name="Neuron">
        <title>A mammalian homolog of Drosophila tumorous imaginal discs, Tid1, mediates agrin signaling at the neuromuscular junction.</title>
        <authorList>
            <person name="Linnoila J."/>
            <person name="Wang Y."/>
            <person name="Yao Y."/>
            <person name="Wang Z.Z."/>
        </authorList>
    </citation>
    <scope>INTERACTION WITH DNAJA3</scope>
</reference>
<reference key="5">
    <citation type="journal article" date="2010" name="Mol. Cell">
        <title>The cytoplasmic adaptor protein Dok7 activates the receptor tyrosine kinase MuSK via dimerization.</title>
        <authorList>
            <person name="Bergamin E."/>
            <person name="Hallock P.T."/>
            <person name="Burden S.J."/>
            <person name="Hubbard S.R."/>
        </authorList>
    </citation>
    <scope>INTERACTION WITH DOK7</scope>
    <scope>ACTIVITY REGULATION</scope>
    <scope>PHOSPHORYLATION AT TYR-754</scope>
</reference>
<reference key="6">
    <citation type="journal article" date="2013" name="PLoS ONE">
        <title>A mutation causes MuSK reduced sensitivity to agrin and congenital myasthenia.</title>
        <authorList>
            <person name="Ben Ammar A."/>
            <person name="Soltanzadeh P."/>
            <person name="Bauche S."/>
            <person name="Richard P."/>
            <person name="Goillot E."/>
            <person name="Herbst R."/>
            <person name="Gaudon K."/>
            <person name="Huze C."/>
            <person name="Schaeffer L."/>
            <person name="Yamanashi Y."/>
            <person name="Higuchi O."/>
            <person name="Taly A."/>
            <person name="Koenig J."/>
            <person name="Leroy J.P."/>
            <person name="Hentati F."/>
            <person name="Najmabadi H."/>
            <person name="Kahrizi K."/>
            <person name="Ilkhani M."/>
            <person name="Fardeau M."/>
            <person name="Eymard B."/>
            <person name="Hantai D."/>
        </authorList>
    </citation>
    <scope>FUNCTION</scope>
    <scope>INTERACTION WITH DOK7</scope>
    <scope>PHOSPHORYLATION</scope>
    <scope>MUTAGENESIS OF VAL-789 AND MET-834</scope>
</reference>
<reference key="7">
    <citation type="journal article" date="2002" name="Structure">
        <title>Crystal structure of the MuSK tyrosine kinase: insights into receptor autoregulation.</title>
        <authorList>
            <person name="Till J.H."/>
            <person name="Becerra M."/>
            <person name="Watty A."/>
            <person name="Lu Y."/>
            <person name="Ma Y."/>
            <person name="Neubert T.A."/>
            <person name="Burden S.J."/>
            <person name="Hubbard S.R."/>
        </authorList>
    </citation>
    <scope>X-RAY CRYSTALLOGRAPHY (2.05 ANGSTROMS) OF 560-860</scope>
</reference>
<reference key="8">
    <citation type="journal article" date="2006" name="J. Mol. Biol.">
        <title>Crystal structure of the agrin-responsive immunoglobulin-like domains 1 and 2 of the receptor tyrosine kinase MuSK.</title>
        <authorList>
            <person name="Stiegler A.L."/>
            <person name="Burden S.J."/>
            <person name="Hubbard S.R."/>
        </authorList>
    </citation>
    <scope>X-RAY CRYSTALLOGRAPHY (2.21 ANGSTROMS) OF 22-212</scope>
    <scope>FUNCTION</scope>
    <scope>PHOSPHORYLATION</scope>
    <scope>SUBUNIT</scope>
    <scope>SUBCELLULAR LOCATION</scope>
    <scope>MUTAGENESIS OF MET-48; LEU-83 AND ILE-96</scope>
    <scope>DISULFIDE BONDS</scope>
</reference>
<reference key="9">
    <citation type="journal article" date="2009" name="J. Mol. Biol.">
        <title>Crystal structure of the frizzled-like cysteine-rich domain of the receptor tyrosine kinase MuSK.</title>
        <authorList>
            <person name="Stiegler A.L."/>
            <person name="Burden S.J."/>
            <person name="Hubbard S.R."/>
        </authorList>
    </citation>
    <scope>X-RAY CRYSTALLOGRAPHY (2.1 ANGSTROMS) OF 313-494</scope>
    <scope>SUBUNIT</scope>
    <scope>DISULFIDE BONDS</scope>
    <scope>GLYCOSYLATION AT ASN-338</scope>
</reference>
<accession>Q62838</accession>
<dbReference type="EC" id="2.7.10.1"/>
<dbReference type="EMBL" id="U34985">
    <property type="protein sequence ID" value="AAA90956.1"/>
    <property type="molecule type" value="mRNA"/>
</dbReference>
<dbReference type="RefSeq" id="NP_112323.1">
    <property type="nucleotide sequence ID" value="NM_031061.1"/>
</dbReference>
<dbReference type="PDB" id="1LUF">
    <property type="method" value="X-ray"/>
    <property type="resolution" value="2.05 A"/>
    <property type="chains" value="A=529-868"/>
</dbReference>
<dbReference type="PDB" id="2IEP">
    <property type="method" value="X-ray"/>
    <property type="resolution" value="2.21 A"/>
    <property type="chains" value="A/B=22-212"/>
</dbReference>
<dbReference type="PDB" id="3HKL">
    <property type="method" value="X-ray"/>
    <property type="resolution" value="2.10 A"/>
    <property type="chains" value="A/B=313-494"/>
</dbReference>
<dbReference type="PDBsum" id="1LUF"/>
<dbReference type="PDBsum" id="2IEP"/>
<dbReference type="PDBsum" id="3HKL"/>
<dbReference type="SMR" id="Q62838"/>
<dbReference type="FunCoup" id="Q62838">
    <property type="interactions" value="12"/>
</dbReference>
<dbReference type="IntAct" id="Q62838">
    <property type="interactions" value="7"/>
</dbReference>
<dbReference type="MINT" id="Q62838"/>
<dbReference type="STRING" id="10116.ENSRNOP00000041075"/>
<dbReference type="GlyCosmos" id="Q62838">
    <property type="glycosylation" value="3 sites, No reported glycans"/>
</dbReference>
<dbReference type="GlyGen" id="Q62838">
    <property type="glycosylation" value="4 sites"/>
</dbReference>
<dbReference type="iPTMnet" id="Q62838"/>
<dbReference type="PhosphoSitePlus" id="Q62838"/>
<dbReference type="PaxDb" id="10116-ENSRNOP00000041075"/>
<dbReference type="GeneID" id="81725"/>
<dbReference type="KEGG" id="rno:81725"/>
<dbReference type="UCSC" id="RGD:3211">
    <property type="organism name" value="rat"/>
</dbReference>
<dbReference type="AGR" id="RGD:3211"/>
<dbReference type="CTD" id="4593"/>
<dbReference type="RGD" id="3211">
    <property type="gene designation" value="Musk"/>
</dbReference>
<dbReference type="eggNOG" id="KOG1026">
    <property type="taxonomic scope" value="Eukaryota"/>
</dbReference>
<dbReference type="InParanoid" id="Q62838"/>
<dbReference type="EvolutionaryTrace" id="Q62838"/>
<dbReference type="PRO" id="PR:Q62838"/>
<dbReference type="Proteomes" id="UP000002494">
    <property type="component" value="Unplaced"/>
</dbReference>
<dbReference type="GO" id="GO:0042995">
    <property type="term" value="C:cell projection"/>
    <property type="evidence" value="ECO:0000314"/>
    <property type="project" value="RGD"/>
</dbReference>
<dbReference type="GO" id="GO:0009897">
    <property type="term" value="C:external side of plasma membrane"/>
    <property type="evidence" value="ECO:0000314"/>
    <property type="project" value="RGD"/>
</dbReference>
<dbReference type="GO" id="GO:0016020">
    <property type="term" value="C:membrane"/>
    <property type="evidence" value="ECO:0000266"/>
    <property type="project" value="RGD"/>
</dbReference>
<dbReference type="GO" id="GO:0031594">
    <property type="term" value="C:neuromuscular junction"/>
    <property type="evidence" value="ECO:0000314"/>
    <property type="project" value="RGD"/>
</dbReference>
<dbReference type="GO" id="GO:0005886">
    <property type="term" value="C:plasma membrane"/>
    <property type="evidence" value="ECO:0000250"/>
    <property type="project" value="UniProtKB"/>
</dbReference>
<dbReference type="GO" id="GO:0045211">
    <property type="term" value="C:postsynaptic membrane"/>
    <property type="evidence" value="ECO:0000266"/>
    <property type="project" value="RGD"/>
</dbReference>
<dbReference type="GO" id="GO:0043235">
    <property type="term" value="C:receptor complex"/>
    <property type="evidence" value="ECO:0000266"/>
    <property type="project" value="RGD"/>
</dbReference>
<dbReference type="GO" id="GO:0045202">
    <property type="term" value="C:synapse"/>
    <property type="evidence" value="ECO:0000266"/>
    <property type="project" value="RGD"/>
</dbReference>
<dbReference type="GO" id="GO:0005524">
    <property type="term" value="F:ATP binding"/>
    <property type="evidence" value="ECO:0007669"/>
    <property type="project" value="UniProtKB-KW"/>
</dbReference>
<dbReference type="GO" id="GO:0046872">
    <property type="term" value="F:metal ion binding"/>
    <property type="evidence" value="ECO:0007669"/>
    <property type="project" value="UniProtKB-KW"/>
</dbReference>
<dbReference type="GO" id="GO:0030165">
    <property type="term" value="F:PDZ domain binding"/>
    <property type="evidence" value="ECO:0000266"/>
    <property type="project" value="RGD"/>
</dbReference>
<dbReference type="GO" id="GO:0019901">
    <property type="term" value="F:protein kinase binding"/>
    <property type="evidence" value="ECO:0000353"/>
    <property type="project" value="RGD"/>
</dbReference>
<dbReference type="GO" id="GO:0004713">
    <property type="term" value="F:protein tyrosine kinase activity"/>
    <property type="evidence" value="ECO:0000314"/>
    <property type="project" value="UniProtKB"/>
</dbReference>
<dbReference type="GO" id="GO:0004714">
    <property type="term" value="F:transmembrane receptor protein tyrosine kinase activity"/>
    <property type="evidence" value="ECO:0000318"/>
    <property type="project" value="GO_Central"/>
</dbReference>
<dbReference type="GO" id="GO:0017147">
    <property type="term" value="F:Wnt-protein binding"/>
    <property type="evidence" value="ECO:0000318"/>
    <property type="project" value="GO_Central"/>
</dbReference>
<dbReference type="GO" id="GO:0030154">
    <property type="term" value="P:cell differentiation"/>
    <property type="evidence" value="ECO:0007669"/>
    <property type="project" value="UniProtKB-KW"/>
</dbReference>
<dbReference type="GO" id="GO:0007169">
    <property type="term" value="P:cell surface receptor protein tyrosine kinase signaling pathway"/>
    <property type="evidence" value="ECO:0000318"/>
    <property type="project" value="GO_Central"/>
</dbReference>
<dbReference type="GO" id="GO:0090102">
    <property type="term" value="P:cochlea development"/>
    <property type="evidence" value="ECO:0000270"/>
    <property type="project" value="RGD"/>
</dbReference>
<dbReference type="GO" id="GO:0007167">
    <property type="term" value="P:enzyme-linked receptor protein signaling pathway"/>
    <property type="evidence" value="ECO:0000266"/>
    <property type="project" value="RGD"/>
</dbReference>
<dbReference type="GO" id="GO:0060291">
    <property type="term" value="P:long-term synaptic potentiation"/>
    <property type="evidence" value="ECO:0000315"/>
    <property type="project" value="RGD"/>
</dbReference>
<dbReference type="GO" id="GO:0007613">
    <property type="term" value="P:memory"/>
    <property type="evidence" value="ECO:0000315"/>
    <property type="project" value="RGD"/>
</dbReference>
<dbReference type="GO" id="GO:0097049">
    <property type="term" value="P:motor neuron apoptotic process"/>
    <property type="evidence" value="ECO:0000266"/>
    <property type="project" value="RGD"/>
</dbReference>
<dbReference type="GO" id="GO:0010629">
    <property type="term" value="P:negative regulation of gene expression"/>
    <property type="evidence" value="ECO:0000314"/>
    <property type="project" value="RGD"/>
</dbReference>
<dbReference type="GO" id="GO:0007528">
    <property type="term" value="P:neuromuscular junction development"/>
    <property type="evidence" value="ECO:0000270"/>
    <property type="project" value="RGD"/>
</dbReference>
<dbReference type="GO" id="GO:0010628">
    <property type="term" value="P:positive regulation of gene expression"/>
    <property type="evidence" value="ECO:0000315"/>
    <property type="project" value="RGD"/>
</dbReference>
<dbReference type="GO" id="GO:2000673">
    <property type="term" value="P:positive regulation of motor neuron apoptotic process"/>
    <property type="evidence" value="ECO:0000266"/>
    <property type="project" value="RGD"/>
</dbReference>
<dbReference type="GO" id="GO:0035022">
    <property type="term" value="P:positive regulation of Rac protein signal transduction"/>
    <property type="evidence" value="ECO:0000266"/>
    <property type="project" value="RGD"/>
</dbReference>
<dbReference type="GO" id="GO:1904395">
    <property type="term" value="P:positive regulation of skeletal muscle acetylcholine-gated channel clustering"/>
    <property type="evidence" value="ECO:0000266"/>
    <property type="project" value="RGD"/>
</dbReference>
<dbReference type="GO" id="GO:0045887">
    <property type="term" value="P:positive regulation of synaptic assembly at neuromuscular junction"/>
    <property type="evidence" value="ECO:0000315"/>
    <property type="project" value="RGD"/>
</dbReference>
<dbReference type="GO" id="GO:0032224">
    <property type="term" value="P:positive regulation of synaptic transmission, cholinergic"/>
    <property type="evidence" value="ECO:0000315"/>
    <property type="project" value="RGD"/>
</dbReference>
<dbReference type="GO" id="GO:0043113">
    <property type="term" value="P:receptor clustering"/>
    <property type="evidence" value="ECO:0000315"/>
    <property type="project" value="RGD"/>
</dbReference>
<dbReference type="GO" id="GO:0006355">
    <property type="term" value="P:regulation of DNA-templated transcription"/>
    <property type="evidence" value="ECO:0000266"/>
    <property type="project" value="RGD"/>
</dbReference>
<dbReference type="GO" id="GO:0008582">
    <property type="term" value="P:regulation of synaptic assembly at neuromuscular junction"/>
    <property type="evidence" value="ECO:0000250"/>
    <property type="project" value="UniProtKB"/>
</dbReference>
<dbReference type="GO" id="GO:0048678">
    <property type="term" value="P:response to axon injury"/>
    <property type="evidence" value="ECO:0000270"/>
    <property type="project" value="RGD"/>
</dbReference>
<dbReference type="GO" id="GO:0051602">
    <property type="term" value="P:response to electrical stimulus"/>
    <property type="evidence" value="ECO:0000315"/>
    <property type="project" value="RGD"/>
</dbReference>
<dbReference type="GO" id="GO:0014850">
    <property type="term" value="P:response to muscle activity"/>
    <property type="evidence" value="ECO:0000270"/>
    <property type="project" value="RGD"/>
</dbReference>
<dbReference type="GO" id="GO:0060041">
    <property type="term" value="P:retina development in camera-type eye"/>
    <property type="evidence" value="ECO:0000270"/>
    <property type="project" value="RGD"/>
</dbReference>
<dbReference type="GO" id="GO:0071340">
    <property type="term" value="P:skeletal muscle acetylcholine-gated channel clustering"/>
    <property type="evidence" value="ECO:0000266"/>
    <property type="project" value="RGD"/>
</dbReference>
<dbReference type="CDD" id="cd07469">
    <property type="entry name" value="CRD_TK_ROR_related"/>
    <property type="match status" value="1"/>
</dbReference>
<dbReference type="CDD" id="cd20970">
    <property type="entry name" value="IgI_1_MuSK"/>
    <property type="match status" value="1"/>
</dbReference>
<dbReference type="CDD" id="cd20968">
    <property type="entry name" value="IgI_2_MuSK"/>
    <property type="match status" value="1"/>
</dbReference>
<dbReference type="CDD" id="cd05050">
    <property type="entry name" value="PTKc_Musk"/>
    <property type="match status" value="1"/>
</dbReference>
<dbReference type="FunFam" id="1.10.510.10:FF:000176">
    <property type="entry name" value="Muscle, skeletal receptor tyrosine protein kinase"/>
    <property type="match status" value="1"/>
</dbReference>
<dbReference type="FunFam" id="2.60.40.10:FF:000260">
    <property type="entry name" value="Muscle, skeletal receptor tyrosine protein kinase"/>
    <property type="match status" value="1"/>
</dbReference>
<dbReference type="FunFam" id="2.60.40.10:FF:000322">
    <property type="entry name" value="Muscle, skeletal receptor tyrosine protein kinase"/>
    <property type="match status" value="1"/>
</dbReference>
<dbReference type="FunFam" id="2.60.40.10:FF:000409">
    <property type="entry name" value="Muscle, skeletal receptor tyrosine protein kinase"/>
    <property type="match status" value="1"/>
</dbReference>
<dbReference type="FunFam" id="3.30.200.20:FF:000159">
    <property type="entry name" value="muscle, skeletal receptor tyrosine-protein kinase"/>
    <property type="match status" value="1"/>
</dbReference>
<dbReference type="FunFam" id="1.10.2000.10:FF:000009">
    <property type="entry name" value="Muscle, skeletal, receptor tyrosine kinase"/>
    <property type="match status" value="1"/>
</dbReference>
<dbReference type="Gene3D" id="1.10.2000.10">
    <property type="entry name" value="Frizzled cysteine-rich domain"/>
    <property type="match status" value="1"/>
</dbReference>
<dbReference type="Gene3D" id="2.60.40.10">
    <property type="entry name" value="Immunoglobulins"/>
    <property type="match status" value="3"/>
</dbReference>
<dbReference type="Gene3D" id="3.30.200.20">
    <property type="entry name" value="Phosphorylase Kinase, domain 1"/>
    <property type="match status" value="1"/>
</dbReference>
<dbReference type="Gene3D" id="1.10.510.10">
    <property type="entry name" value="Transferase(Phosphotransferase) domain 1"/>
    <property type="match status" value="1"/>
</dbReference>
<dbReference type="InterPro" id="IPR020067">
    <property type="entry name" value="Frizzled_dom"/>
</dbReference>
<dbReference type="InterPro" id="IPR036790">
    <property type="entry name" value="Frizzled_dom_sf"/>
</dbReference>
<dbReference type="InterPro" id="IPR007110">
    <property type="entry name" value="Ig-like_dom"/>
</dbReference>
<dbReference type="InterPro" id="IPR036179">
    <property type="entry name" value="Ig-like_dom_sf"/>
</dbReference>
<dbReference type="InterPro" id="IPR013783">
    <property type="entry name" value="Ig-like_fold"/>
</dbReference>
<dbReference type="InterPro" id="IPR013098">
    <property type="entry name" value="Ig_I-set"/>
</dbReference>
<dbReference type="InterPro" id="IPR003599">
    <property type="entry name" value="Ig_sub"/>
</dbReference>
<dbReference type="InterPro" id="IPR003598">
    <property type="entry name" value="Ig_sub2"/>
</dbReference>
<dbReference type="InterPro" id="IPR011009">
    <property type="entry name" value="Kinase-like_dom_sf"/>
</dbReference>
<dbReference type="InterPro" id="IPR000719">
    <property type="entry name" value="Prot_kinase_dom"/>
</dbReference>
<dbReference type="InterPro" id="IPR017441">
    <property type="entry name" value="Protein_kinase_ATP_BS"/>
</dbReference>
<dbReference type="InterPro" id="IPR050122">
    <property type="entry name" value="RTK"/>
</dbReference>
<dbReference type="InterPro" id="IPR001245">
    <property type="entry name" value="Ser-Thr/Tyr_kinase_cat_dom"/>
</dbReference>
<dbReference type="InterPro" id="IPR008266">
    <property type="entry name" value="Tyr_kinase_AS"/>
</dbReference>
<dbReference type="InterPro" id="IPR020635">
    <property type="entry name" value="Tyr_kinase_cat_dom"/>
</dbReference>
<dbReference type="PANTHER" id="PTHR24416:SF317">
    <property type="entry name" value="MUSCLE, SKELETAL RECEPTOR TYROSINE-PROTEIN KINASE"/>
    <property type="match status" value="1"/>
</dbReference>
<dbReference type="PANTHER" id="PTHR24416">
    <property type="entry name" value="TYROSINE-PROTEIN KINASE RECEPTOR"/>
    <property type="match status" value="1"/>
</dbReference>
<dbReference type="Pfam" id="PF01392">
    <property type="entry name" value="Fz"/>
    <property type="match status" value="1"/>
</dbReference>
<dbReference type="Pfam" id="PF07679">
    <property type="entry name" value="I-set"/>
    <property type="match status" value="3"/>
</dbReference>
<dbReference type="Pfam" id="PF07714">
    <property type="entry name" value="PK_Tyr_Ser-Thr"/>
    <property type="match status" value="1"/>
</dbReference>
<dbReference type="PIRSF" id="PIRSF000615">
    <property type="entry name" value="TyrPK_CSF1-R"/>
    <property type="match status" value="1"/>
</dbReference>
<dbReference type="PRINTS" id="PR00109">
    <property type="entry name" value="TYRKINASE"/>
</dbReference>
<dbReference type="SMART" id="SM00409">
    <property type="entry name" value="IG"/>
    <property type="match status" value="3"/>
</dbReference>
<dbReference type="SMART" id="SM00408">
    <property type="entry name" value="IGc2"/>
    <property type="match status" value="3"/>
</dbReference>
<dbReference type="SMART" id="SM00219">
    <property type="entry name" value="TyrKc"/>
    <property type="match status" value="1"/>
</dbReference>
<dbReference type="SUPFAM" id="SSF48726">
    <property type="entry name" value="Immunoglobulin"/>
    <property type="match status" value="3"/>
</dbReference>
<dbReference type="SUPFAM" id="SSF56112">
    <property type="entry name" value="Protein kinase-like (PK-like)"/>
    <property type="match status" value="1"/>
</dbReference>
<dbReference type="PROSITE" id="PS50038">
    <property type="entry name" value="FZ"/>
    <property type="match status" value="1"/>
</dbReference>
<dbReference type="PROSITE" id="PS50835">
    <property type="entry name" value="IG_LIKE"/>
    <property type="match status" value="3"/>
</dbReference>
<dbReference type="PROSITE" id="PS00107">
    <property type="entry name" value="PROTEIN_KINASE_ATP"/>
    <property type="match status" value="1"/>
</dbReference>
<dbReference type="PROSITE" id="PS50011">
    <property type="entry name" value="PROTEIN_KINASE_DOM"/>
    <property type="match status" value="1"/>
</dbReference>
<dbReference type="PROSITE" id="PS00109">
    <property type="entry name" value="PROTEIN_KINASE_TYR"/>
    <property type="match status" value="1"/>
</dbReference>